<accession>Q3AP34</accession>
<gene>
    <name evidence="1" type="primary">rnhB</name>
    <name type="ordered locus">Cag_1993</name>
</gene>
<reference key="1">
    <citation type="submission" date="2005-08" db="EMBL/GenBank/DDBJ databases">
        <title>Complete sequence of Chlorobium chlorochromatii CaD3.</title>
        <authorList>
            <consortium name="US DOE Joint Genome Institute"/>
            <person name="Copeland A."/>
            <person name="Lucas S."/>
            <person name="Lapidus A."/>
            <person name="Barry K."/>
            <person name="Detter J.C."/>
            <person name="Glavina T."/>
            <person name="Hammon N."/>
            <person name="Israni S."/>
            <person name="Pitluck S."/>
            <person name="Bryant D."/>
            <person name="Schmutz J."/>
            <person name="Larimer F."/>
            <person name="Land M."/>
            <person name="Kyrpides N."/>
            <person name="Ivanova N."/>
            <person name="Richardson P."/>
        </authorList>
    </citation>
    <scope>NUCLEOTIDE SEQUENCE [LARGE SCALE GENOMIC DNA]</scope>
    <source>
        <strain>CaD3</strain>
    </source>
</reference>
<keyword id="KW-0963">Cytoplasm</keyword>
<keyword id="KW-0255">Endonuclease</keyword>
<keyword id="KW-0378">Hydrolase</keyword>
<keyword id="KW-0464">Manganese</keyword>
<keyword id="KW-0479">Metal-binding</keyword>
<keyword id="KW-0540">Nuclease</keyword>
<sequence length="206" mass="23014">MHTHYEEPLWQHYEFICGIDEVGRGPLAGPVVAAAVVFPRWFQPTEALLTLLNDSKKLSAKERESLVPAIKAQALHWALAEVQHNVIDEVNILQATMLAMNNAVKALPIIPSLLLVDGNRFTTDLAIPYKTIVKGDSHVFSIAAASVLAKVHRDALMCVYATHYPHYGFERHAGYPTSAHIEAIRQHGRCPIHRQSFKLRQLGEKV</sequence>
<feature type="chain" id="PRO_0000235712" description="Ribonuclease HII">
    <location>
        <begin position="1"/>
        <end position="206"/>
    </location>
</feature>
<feature type="domain" description="RNase H type-2" evidence="2">
    <location>
        <begin position="14"/>
        <end position="206"/>
    </location>
</feature>
<feature type="binding site" evidence="1">
    <location>
        <position position="20"/>
    </location>
    <ligand>
        <name>a divalent metal cation</name>
        <dbReference type="ChEBI" id="CHEBI:60240"/>
    </ligand>
</feature>
<feature type="binding site" evidence="1">
    <location>
        <position position="21"/>
    </location>
    <ligand>
        <name>a divalent metal cation</name>
        <dbReference type="ChEBI" id="CHEBI:60240"/>
    </ligand>
</feature>
<feature type="binding site" evidence="1">
    <location>
        <position position="117"/>
    </location>
    <ligand>
        <name>a divalent metal cation</name>
        <dbReference type="ChEBI" id="CHEBI:60240"/>
    </ligand>
</feature>
<proteinExistence type="inferred from homology"/>
<evidence type="ECO:0000255" key="1">
    <source>
        <dbReference type="HAMAP-Rule" id="MF_00052"/>
    </source>
</evidence>
<evidence type="ECO:0000255" key="2">
    <source>
        <dbReference type="PROSITE-ProRule" id="PRU01319"/>
    </source>
</evidence>
<dbReference type="EC" id="3.1.26.4" evidence="1"/>
<dbReference type="EMBL" id="CP000108">
    <property type="protein sequence ID" value="ABB29241.1"/>
    <property type="molecule type" value="Genomic_DNA"/>
</dbReference>
<dbReference type="SMR" id="Q3AP34"/>
<dbReference type="STRING" id="340177.Cag_1993"/>
<dbReference type="KEGG" id="cch:Cag_1993"/>
<dbReference type="eggNOG" id="COG0164">
    <property type="taxonomic scope" value="Bacteria"/>
</dbReference>
<dbReference type="HOGENOM" id="CLU_036532_3_2_10"/>
<dbReference type="OrthoDB" id="9803420at2"/>
<dbReference type="GO" id="GO:0005737">
    <property type="term" value="C:cytoplasm"/>
    <property type="evidence" value="ECO:0007669"/>
    <property type="project" value="UniProtKB-SubCell"/>
</dbReference>
<dbReference type="GO" id="GO:0032299">
    <property type="term" value="C:ribonuclease H2 complex"/>
    <property type="evidence" value="ECO:0007669"/>
    <property type="project" value="TreeGrafter"/>
</dbReference>
<dbReference type="GO" id="GO:0030145">
    <property type="term" value="F:manganese ion binding"/>
    <property type="evidence" value="ECO:0007669"/>
    <property type="project" value="UniProtKB-UniRule"/>
</dbReference>
<dbReference type="GO" id="GO:0003723">
    <property type="term" value="F:RNA binding"/>
    <property type="evidence" value="ECO:0007669"/>
    <property type="project" value="InterPro"/>
</dbReference>
<dbReference type="GO" id="GO:0004523">
    <property type="term" value="F:RNA-DNA hybrid ribonuclease activity"/>
    <property type="evidence" value="ECO:0007669"/>
    <property type="project" value="UniProtKB-UniRule"/>
</dbReference>
<dbReference type="GO" id="GO:0043137">
    <property type="term" value="P:DNA replication, removal of RNA primer"/>
    <property type="evidence" value="ECO:0007669"/>
    <property type="project" value="TreeGrafter"/>
</dbReference>
<dbReference type="GO" id="GO:0006298">
    <property type="term" value="P:mismatch repair"/>
    <property type="evidence" value="ECO:0007669"/>
    <property type="project" value="TreeGrafter"/>
</dbReference>
<dbReference type="CDD" id="cd07182">
    <property type="entry name" value="RNase_HII_bacteria_HII_like"/>
    <property type="match status" value="1"/>
</dbReference>
<dbReference type="FunFam" id="3.30.420.10:FF:000006">
    <property type="entry name" value="Ribonuclease HII"/>
    <property type="match status" value="1"/>
</dbReference>
<dbReference type="Gene3D" id="3.30.420.10">
    <property type="entry name" value="Ribonuclease H-like superfamily/Ribonuclease H"/>
    <property type="match status" value="1"/>
</dbReference>
<dbReference type="HAMAP" id="MF_00052_B">
    <property type="entry name" value="RNase_HII_B"/>
    <property type="match status" value="1"/>
</dbReference>
<dbReference type="InterPro" id="IPR022898">
    <property type="entry name" value="RNase_HII"/>
</dbReference>
<dbReference type="InterPro" id="IPR001352">
    <property type="entry name" value="RNase_HII/HIII"/>
</dbReference>
<dbReference type="InterPro" id="IPR024567">
    <property type="entry name" value="RNase_HII/HIII_dom"/>
</dbReference>
<dbReference type="InterPro" id="IPR012337">
    <property type="entry name" value="RNaseH-like_sf"/>
</dbReference>
<dbReference type="InterPro" id="IPR036397">
    <property type="entry name" value="RNaseH_sf"/>
</dbReference>
<dbReference type="NCBIfam" id="NF000594">
    <property type="entry name" value="PRK00015.1-1"/>
    <property type="match status" value="1"/>
</dbReference>
<dbReference type="NCBIfam" id="NF000595">
    <property type="entry name" value="PRK00015.1-3"/>
    <property type="match status" value="1"/>
</dbReference>
<dbReference type="PANTHER" id="PTHR10954">
    <property type="entry name" value="RIBONUCLEASE H2 SUBUNIT A"/>
    <property type="match status" value="1"/>
</dbReference>
<dbReference type="PANTHER" id="PTHR10954:SF18">
    <property type="entry name" value="RIBONUCLEASE HII"/>
    <property type="match status" value="1"/>
</dbReference>
<dbReference type="Pfam" id="PF01351">
    <property type="entry name" value="RNase_HII"/>
    <property type="match status" value="1"/>
</dbReference>
<dbReference type="SUPFAM" id="SSF53098">
    <property type="entry name" value="Ribonuclease H-like"/>
    <property type="match status" value="1"/>
</dbReference>
<dbReference type="PROSITE" id="PS51975">
    <property type="entry name" value="RNASE_H_2"/>
    <property type="match status" value="1"/>
</dbReference>
<organism>
    <name type="scientific">Chlorobium chlorochromatii (strain CaD3)</name>
    <dbReference type="NCBI Taxonomy" id="340177"/>
    <lineage>
        <taxon>Bacteria</taxon>
        <taxon>Pseudomonadati</taxon>
        <taxon>Chlorobiota</taxon>
        <taxon>Chlorobiia</taxon>
        <taxon>Chlorobiales</taxon>
        <taxon>Chlorobiaceae</taxon>
        <taxon>Chlorobium/Pelodictyon group</taxon>
        <taxon>Chlorobium</taxon>
    </lineage>
</organism>
<name>RNH2_CHLCH</name>
<comment type="function">
    <text evidence="1">Endonuclease that specifically degrades the RNA of RNA-DNA hybrids.</text>
</comment>
<comment type="catalytic activity">
    <reaction evidence="1">
        <text>Endonucleolytic cleavage to 5'-phosphomonoester.</text>
        <dbReference type="EC" id="3.1.26.4"/>
    </reaction>
</comment>
<comment type="cofactor">
    <cofactor evidence="1">
        <name>Mn(2+)</name>
        <dbReference type="ChEBI" id="CHEBI:29035"/>
    </cofactor>
    <cofactor evidence="1">
        <name>Mg(2+)</name>
        <dbReference type="ChEBI" id="CHEBI:18420"/>
    </cofactor>
    <text evidence="1">Manganese or magnesium. Binds 1 divalent metal ion per monomer in the absence of substrate. May bind a second metal ion after substrate binding.</text>
</comment>
<comment type="subcellular location">
    <subcellularLocation>
        <location evidence="1">Cytoplasm</location>
    </subcellularLocation>
</comment>
<comment type="similarity">
    <text evidence="1">Belongs to the RNase HII family.</text>
</comment>
<protein>
    <recommendedName>
        <fullName evidence="1">Ribonuclease HII</fullName>
        <shortName evidence="1">RNase HII</shortName>
        <ecNumber evidence="1">3.1.26.4</ecNumber>
    </recommendedName>
</protein>